<dbReference type="EC" id="1.2.1.70" evidence="1"/>
<dbReference type="EMBL" id="AJ508220">
    <property type="protein sequence ID" value="CAD48144.1"/>
    <property type="molecule type" value="Genomic_DNA"/>
</dbReference>
<dbReference type="SMR" id="Q8GCB0"/>
<dbReference type="UniPathway" id="UPA00251">
    <property type="reaction ID" value="UER00316"/>
</dbReference>
<dbReference type="GO" id="GO:0008883">
    <property type="term" value="F:glutamyl-tRNA reductase activity"/>
    <property type="evidence" value="ECO:0007669"/>
    <property type="project" value="UniProtKB-UniRule"/>
</dbReference>
<dbReference type="GO" id="GO:0050661">
    <property type="term" value="F:NADP binding"/>
    <property type="evidence" value="ECO:0007669"/>
    <property type="project" value="InterPro"/>
</dbReference>
<dbReference type="GO" id="GO:0019353">
    <property type="term" value="P:protoporphyrinogen IX biosynthetic process from glutamate"/>
    <property type="evidence" value="ECO:0007669"/>
    <property type="project" value="TreeGrafter"/>
</dbReference>
<dbReference type="CDD" id="cd05213">
    <property type="entry name" value="NAD_bind_Glutamyl_tRNA_reduct"/>
    <property type="match status" value="1"/>
</dbReference>
<dbReference type="FunFam" id="3.30.460.30:FF:000001">
    <property type="entry name" value="Glutamyl-tRNA reductase"/>
    <property type="match status" value="1"/>
</dbReference>
<dbReference type="FunFam" id="3.40.50.720:FF:000031">
    <property type="entry name" value="Glutamyl-tRNA reductase"/>
    <property type="match status" value="1"/>
</dbReference>
<dbReference type="Gene3D" id="3.30.460.30">
    <property type="entry name" value="Glutamyl-tRNA reductase, N-terminal domain"/>
    <property type="match status" value="1"/>
</dbReference>
<dbReference type="Gene3D" id="3.40.50.720">
    <property type="entry name" value="NAD(P)-binding Rossmann-like Domain"/>
    <property type="match status" value="1"/>
</dbReference>
<dbReference type="HAMAP" id="MF_00087">
    <property type="entry name" value="Glu_tRNA_reductase"/>
    <property type="match status" value="1"/>
</dbReference>
<dbReference type="InterPro" id="IPR000343">
    <property type="entry name" value="4pyrrol_synth_GluRdtase"/>
</dbReference>
<dbReference type="InterPro" id="IPR015896">
    <property type="entry name" value="4pyrrol_synth_GluRdtase_dimer"/>
</dbReference>
<dbReference type="InterPro" id="IPR015895">
    <property type="entry name" value="4pyrrol_synth_GluRdtase_N"/>
</dbReference>
<dbReference type="InterPro" id="IPR018214">
    <property type="entry name" value="GluRdtase_CS"/>
</dbReference>
<dbReference type="InterPro" id="IPR036453">
    <property type="entry name" value="GluRdtase_dimer_dom_sf"/>
</dbReference>
<dbReference type="InterPro" id="IPR036343">
    <property type="entry name" value="GluRdtase_N_sf"/>
</dbReference>
<dbReference type="InterPro" id="IPR036291">
    <property type="entry name" value="NAD(P)-bd_dom_sf"/>
</dbReference>
<dbReference type="InterPro" id="IPR006151">
    <property type="entry name" value="Shikm_DH/Glu-tRNA_Rdtase"/>
</dbReference>
<dbReference type="NCBIfam" id="TIGR01035">
    <property type="entry name" value="hemA"/>
    <property type="match status" value="1"/>
</dbReference>
<dbReference type="NCBIfam" id="NF000744">
    <property type="entry name" value="PRK00045.1-3"/>
    <property type="match status" value="1"/>
</dbReference>
<dbReference type="PANTHER" id="PTHR43013">
    <property type="entry name" value="GLUTAMYL-TRNA REDUCTASE"/>
    <property type="match status" value="1"/>
</dbReference>
<dbReference type="PANTHER" id="PTHR43013:SF1">
    <property type="entry name" value="GLUTAMYL-TRNA REDUCTASE"/>
    <property type="match status" value="1"/>
</dbReference>
<dbReference type="Pfam" id="PF00745">
    <property type="entry name" value="GlutR_dimer"/>
    <property type="match status" value="1"/>
</dbReference>
<dbReference type="Pfam" id="PF05201">
    <property type="entry name" value="GlutR_N"/>
    <property type="match status" value="1"/>
</dbReference>
<dbReference type="Pfam" id="PF01488">
    <property type="entry name" value="Shikimate_DH"/>
    <property type="match status" value="1"/>
</dbReference>
<dbReference type="PIRSF" id="PIRSF000445">
    <property type="entry name" value="4pyrrol_synth_GluRdtase"/>
    <property type="match status" value="1"/>
</dbReference>
<dbReference type="SUPFAM" id="SSF69742">
    <property type="entry name" value="Glutamyl tRNA-reductase catalytic, N-terminal domain"/>
    <property type="match status" value="1"/>
</dbReference>
<dbReference type="SUPFAM" id="SSF69075">
    <property type="entry name" value="Glutamyl tRNA-reductase dimerization domain"/>
    <property type="match status" value="1"/>
</dbReference>
<dbReference type="SUPFAM" id="SSF51735">
    <property type="entry name" value="NAD(P)-binding Rossmann-fold domains"/>
    <property type="match status" value="1"/>
</dbReference>
<dbReference type="PROSITE" id="PS00747">
    <property type="entry name" value="GLUTR"/>
    <property type="match status" value="1"/>
</dbReference>
<proteinExistence type="inferred from homology"/>
<evidence type="ECO:0000255" key="1">
    <source>
        <dbReference type="HAMAP-Rule" id="MF_00087"/>
    </source>
</evidence>
<name>HEM1_PRIMG</name>
<comment type="function">
    <text evidence="1">Catalyzes the NADPH-dependent reduction of glutamyl-tRNA(Glu) to glutamate 1-semialdehyde (GSA).</text>
</comment>
<comment type="catalytic activity">
    <reaction evidence="1">
        <text>(S)-4-amino-5-oxopentanoate + tRNA(Glu) + NADP(+) = L-glutamyl-tRNA(Glu) + NADPH + H(+)</text>
        <dbReference type="Rhea" id="RHEA:12344"/>
        <dbReference type="Rhea" id="RHEA-COMP:9663"/>
        <dbReference type="Rhea" id="RHEA-COMP:9680"/>
        <dbReference type="ChEBI" id="CHEBI:15378"/>
        <dbReference type="ChEBI" id="CHEBI:57501"/>
        <dbReference type="ChEBI" id="CHEBI:57783"/>
        <dbReference type="ChEBI" id="CHEBI:58349"/>
        <dbReference type="ChEBI" id="CHEBI:78442"/>
        <dbReference type="ChEBI" id="CHEBI:78520"/>
        <dbReference type="EC" id="1.2.1.70"/>
    </reaction>
</comment>
<comment type="pathway">
    <text evidence="1">Porphyrin-containing compound metabolism; protoporphyrin-IX biosynthesis; 5-aminolevulinate from L-glutamyl-tRNA(Glu): step 1/2.</text>
</comment>
<comment type="subunit">
    <text evidence="1">Homodimer.</text>
</comment>
<comment type="domain">
    <text evidence="1">Possesses an unusual extended V-shaped dimeric structure with each monomer consisting of three distinct domains arranged along a curved 'spinal' alpha-helix. The N-terminal catalytic domain specifically recognizes the glutamate moiety of the substrate. The second domain is the NADPH-binding domain, and the third C-terminal domain is responsible for dimerization.</text>
</comment>
<comment type="miscellaneous">
    <text evidence="1">During catalysis, the active site Cys acts as a nucleophile attacking the alpha-carbonyl group of tRNA-bound glutamate with the formation of a thioester intermediate between enzyme and glutamate, and the concomitant release of tRNA(Glu). The thioester intermediate is finally reduced by direct hydride transfer from NADPH, to form the product GSA.</text>
</comment>
<comment type="similarity">
    <text evidence="1">Belongs to the glutamyl-tRNA reductase family.</text>
</comment>
<feature type="chain" id="PRO_0000113994" description="Glutamyl-tRNA reductase">
    <location>
        <begin position="1"/>
        <end position="446"/>
    </location>
</feature>
<feature type="active site" description="Nucleophile" evidence="1">
    <location>
        <position position="50"/>
    </location>
</feature>
<feature type="binding site" evidence="1">
    <location>
        <begin position="49"/>
        <end position="52"/>
    </location>
    <ligand>
        <name>substrate</name>
    </ligand>
</feature>
<feature type="binding site" evidence="1">
    <location>
        <position position="109"/>
    </location>
    <ligand>
        <name>substrate</name>
    </ligand>
</feature>
<feature type="binding site" evidence="1">
    <location>
        <begin position="114"/>
        <end position="116"/>
    </location>
    <ligand>
        <name>substrate</name>
    </ligand>
</feature>
<feature type="binding site" evidence="1">
    <location>
        <position position="120"/>
    </location>
    <ligand>
        <name>substrate</name>
    </ligand>
</feature>
<feature type="binding site" evidence="1">
    <location>
        <begin position="189"/>
        <end position="194"/>
    </location>
    <ligand>
        <name>NADP(+)</name>
        <dbReference type="ChEBI" id="CHEBI:58349"/>
    </ligand>
</feature>
<feature type="site" description="Important for activity" evidence="1">
    <location>
        <position position="99"/>
    </location>
</feature>
<protein>
    <recommendedName>
        <fullName evidence="1">Glutamyl-tRNA reductase</fullName>
        <shortName evidence="1">GluTR</shortName>
        <ecNumber evidence="1">1.2.1.70</ecNumber>
    </recommendedName>
</protein>
<accession>Q8GCB0</accession>
<keyword id="KW-0521">NADP</keyword>
<keyword id="KW-0560">Oxidoreductase</keyword>
<keyword id="KW-0627">Porphyrin biosynthesis</keyword>
<sequence length="446" mass="49838">MHIIAVGLNFRTAPVEIREKLSFNEQELASAMKTLSGQKSILENIIVSTCNRTEIYAVVDQLHTGRYYVKAFLAEWFGIDKEEFSPYLTIYENDGAIEHLYRVACGLDSMVIGETQILGQVRSSFLLAQEEETIGTVFNQLFKQAVTLAKKAHHETEIGANAVSVSYAAVELAKKIFGDLSSKHVLILGAGKMGQLAVQNLYGSGAKKVTVVNRTFEKAQELANRFSGEAKPFADLQHALSEADILISSTGANDYVVTKQMMSEAERTRKGRPLFMVDIAVPRDLDPELDELETVFLYDIDDLNGIVESNLQERQKAADEIEIMLEAEIVAFKSWLGTLGVVPVISALRQKALTIQAETMKSIDRKLPDLSERERKVLNKHTKSIINQLLRDPIPHAKELAGEKHAEESLELFMKIFNIEQEVALQKEKEEQLHTSITSHSVAYQS</sequence>
<organism>
    <name type="scientific">Priestia megaterium</name>
    <name type="common">Bacillus megaterium</name>
    <dbReference type="NCBI Taxonomy" id="1404"/>
    <lineage>
        <taxon>Bacteria</taxon>
        <taxon>Bacillati</taxon>
        <taxon>Bacillota</taxon>
        <taxon>Bacilli</taxon>
        <taxon>Bacillales</taxon>
        <taxon>Bacillaceae</taxon>
        <taxon>Priestia</taxon>
    </lineage>
</organism>
<gene>
    <name evidence="1" type="primary">hemA</name>
</gene>
<reference key="1">
    <citation type="journal article" date="2003" name="Biochem. J.">
        <title>Identification and functional analysis of enzymes required for precorrin-2 dehydrogenation and metal ion insertion in the biosynthesis of sirohaem and cobalamin in Bacillus megaterium.</title>
        <authorList>
            <person name="Raux E."/>
            <person name="Leech H.K."/>
            <person name="Beck R."/>
            <person name="Schubert H.L."/>
            <person name="Santander P.J."/>
            <person name="Roessner C.A."/>
            <person name="Scott A.I."/>
            <person name="Martens J.H."/>
            <person name="Jahn D."/>
            <person name="Thermes C."/>
            <person name="Rambach A."/>
            <person name="Warren M.J."/>
        </authorList>
    </citation>
    <scope>NUCLEOTIDE SEQUENCE [GENOMIC DNA]</scope>
    <source>
        <strain>DSM 509 / CCM 1464 / NBRC 12109</strain>
    </source>
</reference>